<reference key="1">
    <citation type="submission" date="2009-01" db="EMBL/GenBank/DDBJ databases">
        <title>Complete sequence of chromosome of Arthrobacter chlorophenolicus A6.</title>
        <authorList>
            <consortium name="US DOE Joint Genome Institute"/>
            <person name="Lucas S."/>
            <person name="Copeland A."/>
            <person name="Lapidus A."/>
            <person name="Glavina del Rio T."/>
            <person name="Tice H."/>
            <person name="Bruce D."/>
            <person name="Goodwin L."/>
            <person name="Pitluck S."/>
            <person name="Goltsman E."/>
            <person name="Clum A."/>
            <person name="Larimer F."/>
            <person name="Land M."/>
            <person name="Hauser L."/>
            <person name="Kyrpides N."/>
            <person name="Mikhailova N."/>
            <person name="Jansson J."/>
            <person name="Richardson P."/>
        </authorList>
    </citation>
    <scope>NUCLEOTIDE SEQUENCE [LARGE SCALE GENOMIC DNA]</scope>
    <source>
        <strain>ATCC 700700 / DSM 12829 / CIP 107037 / JCM 12360 / KCTC 9906 / NCIMB 13794 / A6</strain>
    </source>
</reference>
<feature type="chain" id="PRO_1000165303" description="Small ribosomal subunit protein uS8">
    <location>
        <begin position="1"/>
        <end position="132"/>
    </location>
</feature>
<sequence length="132" mass="14244">MTMTDPVADMLTRLRNANSAYHDSVSMPYSKLKARVADILKAEGFIAGWKEEDAEVGKKLTLDLKFGPNRERSIAGVRRISKPGLRVYAKSTNLPHVLGGLGIAILSTSSGLLTDKQAGKKGVGGEVLAYVW</sequence>
<protein>
    <recommendedName>
        <fullName evidence="1">Small ribosomal subunit protein uS8</fullName>
    </recommendedName>
    <alternativeName>
        <fullName evidence="2">30S ribosomal protein S8</fullName>
    </alternativeName>
</protein>
<dbReference type="EMBL" id="CP001341">
    <property type="protein sequence ID" value="ACL40639.1"/>
    <property type="molecule type" value="Genomic_DNA"/>
</dbReference>
<dbReference type="RefSeq" id="WP_015937843.1">
    <property type="nucleotide sequence ID" value="NC_011886.1"/>
</dbReference>
<dbReference type="SMR" id="B8HCZ3"/>
<dbReference type="STRING" id="452863.Achl_2674"/>
<dbReference type="KEGG" id="ach:Achl_2674"/>
<dbReference type="eggNOG" id="COG0096">
    <property type="taxonomic scope" value="Bacteria"/>
</dbReference>
<dbReference type="HOGENOM" id="CLU_098428_0_1_11"/>
<dbReference type="OrthoDB" id="9802617at2"/>
<dbReference type="Proteomes" id="UP000002505">
    <property type="component" value="Chromosome"/>
</dbReference>
<dbReference type="GO" id="GO:1990904">
    <property type="term" value="C:ribonucleoprotein complex"/>
    <property type="evidence" value="ECO:0007669"/>
    <property type="project" value="UniProtKB-KW"/>
</dbReference>
<dbReference type="GO" id="GO:0005840">
    <property type="term" value="C:ribosome"/>
    <property type="evidence" value="ECO:0007669"/>
    <property type="project" value="UniProtKB-KW"/>
</dbReference>
<dbReference type="GO" id="GO:0019843">
    <property type="term" value="F:rRNA binding"/>
    <property type="evidence" value="ECO:0007669"/>
    <property type="project" value="UniProtKB-UniRule"/>
</dbReference>
<dbReference type="GO" id="GO:0003735">
    <property type="term" value="F:structural constituent of ribosome"/>
    <property type="evidence" value="ECO:0007669"/>
    <property type="project" value="InterPro"/>
</dbReference>
<dbReference type="GO" id="GO:0006412">
    <property type="term" value="P:translation"/>
    <property type="evidence" value="ECO:0007669"/>
    <property type="project" value="UniProtKB-UniRule"/>
</dbReference>
<dbReference type="FunFam" id="3.30.1370.30:FF:000002">
    <property type="entry name" value="30S ribosomal protein S8"/>
    <property type="match status" value="1"/>
</dbReference>
<dbReference type="FunFam" id="3.30.1490.10:FF:000001">
    <property type="entry name" value="30S ribosomal protein S8"/>
    <property type="match status" value="1"/>
</dbReference>
<dbReference type="Gene3D" id="3.30.1370.30">
    <property type="match status" value="1"/>
</dbReference>
<dbReference type="Gene3D" id="3.30.1490.10">
    <property type="match status" value="1"/>
</dbReference>
<dbReference type="HAMAP" id="MF_01302_B">
    <property type="entry name" value="Ribosomal_uS8_B"/>
    <property type="match status" value="1"/>
</dbReference>
<dbReference type="InterPro" id="IPR000630">
    <property type="entry name" value="Ribosomal_uS8"/>
</dbReference>
<dbReference type="InterPro" id="IPR035987">
    <property type="entry name" value="Ribosomal_uS8_sf"/>
</dbReference>
<dbReference type="NCBIfam" id="NF001109">
    <property type="entry name" value="PRK00136.1"/>
    <property type="match status" value="1"/>
</dbReference>
<dbReference type="PANTHER" id="PTHR11758">
    <property type="entry name" value="40S RIBOSOMAL PROTEIN S15A"/>
    <property type="match status" value="1"/>
</dbReference>
<dbReference type="Pfam" id="PF00410">
    <property type="entry name" value="Ribosomal_S8"/>
    <property type="match status" value="1"/>
</dbReference>
<dbReference type="SUPFAM" id="SSF56047">
    <property type="entry name" value="Ribosomal protein S8"/>
    <property type="match status" value="1"/>
</dbReference>
<organism>
    <name type="scientific">Pseudarthrobacter chlorophenolicus (strain ATCC 700700 / DSM 12829 / CIP 107037 / JCM 12360 / KCTC 9906 / NCIMB 13794 / A6)</name>
    <name type="common">Arthrobacter chlorophenolicus</name>
    <dbReference type="NCBI Taxonomy" id="452863"/>
    <lineage>
        <taxon>Bacteria</taxon>
        <taxon>Bacillati</taxon>
        <taxon>Actinomycetota</taxon>
        <taxon>Actinomycetes</taxon>
        <taxon>Micrococcales</taxon>
        <taxon>Micrococcaceae</taxon>
        <taxon>Pseudarthrobacter</taxon>
    </lineage>
</organism>
<comment type="function">
    <text evidence="1">One of the primary rRNA binding proteins, it binds directly to 16S rRNA central domain where it helps coordinate assembly of the platform of the 30S subunit.</text>
</comment>
<comment type="subunit">
    <text evidence="1">Part of the 30S ribosomal subunit. Contacts proteins S5 and S12.</text>
</comment>
<comment type="similarity">
    <text evidence="1">Belongs to the universal ribosomal protein uS8 family.</text>
</comment>
<evidence type="ECO:0000255" key="1">
    <source>
        <dbReference type="HAMAP-Rule" id="MF_01302"/>
    </source>
</evidence>
<evidence type="ECO:0000305" key="2"/>
<accession>B8HCZ3</accession>
<gene>
    <name evidence="1" type="primary">rpsH</name>
    <name type="ordered locus">Achl_2674</name>
</gene>
<proteinExistence type="inferred from homology"/>
<keyword id="KW-0687">Ribonucleoprotein</keyword>
<keyword id="KW-0689">Ribosomal protein</keyword>
<keyword id="KW-0694">RNA-binding</keyword>
<keyword id="KW-0699">rRNA-binding</keyword>
<name>RS8_PSECP</name>